<comment type="function">
    <text evidence="1">Exhibits S-adenosyl-L-methionine-dependent methyltransferase activity.</text>
</comment>
<comment type="similarity">
    <text evidence="2">Belongs to the UPF0677 family.</text>
</comment>
<dbReference type="EC" id="2.1.1.-"/>
<dbReference type="EMBL" id="CP000325">
    <property type="protein sequence ID" value="ABL05223.1"/>
    <property type="molecule type" value="Genomic_DNA"/>
</dbReference>
<dbReference type="RefSeq" id="WP_011740835.1">
    <property type="nucleotide sequence ID" value="NC_008611.1"/>
</dbReference>
<dbReference type="SMR" id="A0PSA4"/>
<dbReference type="KEGG" id="mul:MUL_2961"/>
<dbReference type="eggNOG" id="COG3315">
    <property type="taxonomic scope" value="Bacteria"/>
</dbReference>
<dbReference type="HOGENOM" id="CLU_056160_2_1_11"/>
<dbReference type="Proteomes" id="UP000000765">
    <property type="component" value="Chromosome"/>
</dbReference>
<dbReference type="GO" id="GO:0008168">
    <property type="term" value="F:methyltransferase activity"/>
    <property type="evidence" value="ECO:0007669"/>
    <property type="project" value="UniProtKB-KW"/>
</dbReference>
<dbReference type="GO" id="GO:0032259">
    <property type="term" value="P:methylation"/>
    <property type="evidence" value="ECO:0007669"/>
    <property type="project" value="UniProtKB-KW"/>
</dbReference>
<dbReference type="Gene3D" id="3.40.50.150">
    <property type="entry name" value="Vaccinia Virus protein VP39"/>
    <property type="match status" value="1"/>
</dbReference>
<dbReference type="InterPro" id="IPR007213">
    <property type="entry name" value="Ppm1/Ppm2/Tcmp"/>
</dbReference>
<dbReference type="InterPro" id="IPR029063">
    <property type="entry name" value="SAM-dependent_MTases_sf"/>
</dbReference>
<dbReference type="InterPro" id="IPR011610">
    <property type="entry name" value="SAM_mthyl_Trfase_ML2640-like"/>
</dbReference>
<dbReference type="NCBIfam" id="TIGR00027">
    <property type="entry name" value="mthyl_TIGR00027"/>
    <property type="match status" value="1"/>
</dbReference>
<dbReference type="PANTHER" id="PTHR43619">
    <property type="entry name" value="S-ADENOSYL-L-METHIONINE-DEPENDENT METHYLTRANSFERASE YKTD-RELATED"/>
    <property type="match status" value="1"/>
</dbReference>
<dbReference type="PANTHER" id="PTHR43619:SF2">
    <property type="entry name" value="S-ADENOSYL-L-METHIONINE-DEPENDENT METHYLTRANSFERASES SUPERFAMILY PROTEIN"/>
    <property type="match status" value="1"/>
</dbReference>
<dbReference type="Pfam" id="PF04072">
    <property type="entry name" value="LCM"/>
    <property type="match status" value="1"/>
</dbReference>
<dbReference type="SUPFAM" id="SSF53335">
    <property type="entry name" value="S-adenosyl-L-methionine-dependent methyltransferases"/>
    <property type="match status" value="1"/>
</dbReference>
<gene>
    <name type="ordered locus">MUL_2961</name>
</gene>
<proteinExistence type="inferred from homology"/>
<sequence>MTTSEYGSRRSDDDQWDIVSGVGYTALLVAGWRALDTVGPQPLAPDEYAKYFIAASGDAYLNDQLAHPPTSVDETAFPRLYGVQTRFFDDFFRSAAAGTKQAVIVAAGLDSRAYRLEWPSGTTVFEIDLAQVLEFKARVLQRHGVEPKARRNAVAADLRTDWPATLHAAGFEPGQPSAWSVEGLLPYLTADAQDALFARIDDLCAPGSRIATGALGSRLDHDQLVALEQTHPGVNLFGDVNFSALTYDDKTNPAQWLAARGWVVEPVRNTLELEAGYGMTPPAVDVRLDAIMHSEYIVATKP</sequence>
<reference key="1">
    <citation type="journal article" date="2007" name="Genome Res.">
        <title>Reductive evolution and niche adaptation inferred from the genome of Mycobacterium ulcerans, the causative agent of Buruli ulcer.</title>
        <authorList>
            <person name="Stinear T.P."/>
            <person name="Seemann T."/>
            <person name="Pidot S."/>
            <person name="Frigui W."/>
            <person name="Reysset G."/>
            <person name="Garnier T."/>
            <person name="Meurice G."/>
            <person name="Simon D."/>
            <person name="Bouchier C."/>
            <person name="Ma L."/>
            <person name="Tichit M."/>
            <person name="Porter J.L."/>
            <person name="Ryan J."/>
            <person name="Johnson P.D.R."/>
            <person name="Davies J.K."/>
            <person name="Jenkin G.A."/>
            <person name="Small P.L.C."/>
            <person name="Jones L.M."/>
            <person name="Tekaia F."/>
            <person name="Laval F."/>
            <person name="Daffe M."/>
            <person name="Parkhill J."/>
            <person name="Cole S.T."/>
        </authorList>
    </citation>
    <scope>NUCLEOTIDE SEQUENCE [LARGE SCALE GENOMIC DNA]</scope>
    <source>
        <strain>Agy99</strain>
    </source>
</reference>
<organism>
    <name type="scientific">Mycobacterium ulcerans (strain Agy99)</name>
    <dbReference type="NCBI Taxonomy" id="362242"/>
    <lineage>
        <taxon>Bacteria</taxon>
        <taxon>Bacillati</taxon>
        <taxon>Actinomycetota</taxon>
        <taxon>Actinomycetes</taxon>
        <taxon>Mycobacteriales</taxon>
        <taxon>Mycobacteriaceae</taxon>
        <taxon>Mycobacterium</taxon>
        <taxon>Mycobacterium ulcerans group</taxon>
    </lineage>
</organism>
<keyword id="KW-0489">Methyltransferase</keyword>
<keyword id="KW-0949">S-adenosyl-L-methionine</keyword>
<keyword id="KW-0808">Transferase</keyword>
<evidence type="ECO:0000250" key="1"/>
<evidence type="ECO:0000305" key="2"/>
<protein>
    <recommendedName>
        <fullName>Putative S-adenosyl-L-methionine-dependent methyltransferase MUL_2961</fullName>
        <ecNumber>2.1.1.-</ecNumber>
    </recommendedName>
</protein>
<accession>A0PSA4</accession>
<feature type="chain" id="PRO_0000361246" description="Putative S-adenosyl-L-methionine-dependent methyltransferase MUL_2961">
    <location>
        <begin position="1"/>
        <end position="302"/>
    </location>
</feature>
<feature type="binding site" evidence="1">
    <location>
        <position position="128"/>
    </location>
    <ligand>
        <name>S-adenosyl-L-methionine</name>
        <dbReference type="ChEBI" id="CHEBI:59789"/>
    </ligand>
</feature>
<feature type="binding site" evidence="1">
    <location>
        <begin position="157"/>
        <end position="158"/>
    </location>
    <ligand>
        <name>S-adenosyl-L-methionine</name>
        <dbReference type="ChEBI" id="CHEBI:59789"/>
    </ligand>
</feature>
<name>Y2961_MYCUA</name>